<gene>
    <name evidence="1" type="primary">coq7</name>
    <name type="ordered locus">BMA10229_A1341</name>
</gene>
<organism>
    <name type="scientific">Burkholderia mallei (strain NCTC 10229)</name>
    <dbReference type="NCBI Taxonomy" id="412022"/>
    <lineage>
        <taxon>Bacteria</taxon>
        <taxon>Pseudomonadati</taxon>
        <taxon>Pseudomonadota</taxon>
        <taxon>Betaproteobacteria</taxon>
        <taxon>Burkholderiales</taxon>
        <taxon>Burkholderiaceae</taxon>
        <taxon>Burkholderia</taxon>
        <taxon>pseudomallei group</taxon>
    </lineage>
</organism>
<name>COQ7_BURM9</name>
<evidence type="ECO:0000255" key="1">
    <source>
        <dbReference type="HAMAP-Rule" id="MF_01658"/>
    </source>
</evidence>
<evidence type="ECO:0000305" key="2"/>
<proteinExistence type="inferred from homology"/>
<feature type="chain" id="PRO_0000338667" description="3-demethoxyubiquinol 3-hydroxylase">
    <location>
        <begin position="1"/>
        <end position="208"/>
    </location>
</feature>
<feature type="binding site" evidence="1">
    <location>
        <position position="57"/>
    </location>
    <ligand>
        <name>Fe cation</name>
        <dbReference type="ChEBI" id="CHEBI:24875"/>
        <label>1</label>
    </ligand>
</feature>
<feature type="binding site" evidence="1">
    <location>
        <position position="87"/>
    </location>
    <ligand>
        <name>Fe cation</name>
        <dbReference type="ChEBI" id="CHEBI:24875"/>
        <label>1</label>
    </ligand>
</feature>
<feature type="binding site" evidence="1">
    <location>
        <position position="87"/>
    </location>
    <ligand>
        <name>Fe cation</name>
        <dbReference type="ChEBI" id="CHEBI:24875"/>
        <label>2</label>
    </ligand>
</feature>
<feature type="binding site" evidence="1">
    <location>
        <position position="90"/>
    </location>
    <ligand>
        <name>Fe cation</name>
        <dbReference type="ChEBI" id="CHEBI:24875"/>
        <label>1</label>
    </ligand>
</feature>
<feature type="binding site" evidence="1">
    <location>
        <position position="139"/>
    </location>
    <ligand>
        <name>Fe cation</name>
        <dbReference type="ChEBI" id="CHEBI:24875"/>
        <label>2</label>
    </ligand>
</feature>
<feature type="binding site" evidence="1">
    <location>
        <position position="171"/>
    </location>
    <ligand>
        <name>Fe cation</name>
        <dbReference type="ChEBI" id="CHEBI:24875"/>
        <label>1</label>
    </ligand>
</feature>
<feature type="binding site" evidence="1">
    <location>
        <position position="171"/>
    </location>
    <ligand>
        <name>Fe cation</name>
        <dbReference type="ChEBI" id="CHEBI:24875"/>
        <label>2</label>
    </ligand>
</feature>
<feature type="binding site" evidence="1">
    <location>
        <position position="174"/>
    </location>
    <ligand>
        <name>Fe cation</name>
        <dbReference type="ChEBI" id="CHEBI:24875"/>
        <label>2</label>
    </ligand>
</feature>
<keyword id="KW-1003">Cell membrane</keyword>
<keyword id="KW-0408">Iron</keyword>
<keyword id="KW-0472">Membrane</keyword>
<keyword id="KW-0479">Metal-binding</keyword>
<keyword id="KW-0503">Monooxygenase</keyword>
<keyword id="KW-0560">Oxidoreductase</keyword>
<keyword id="KW-0831">Ubiquinone biosynthesis</keyword>
<dbReference type="EC" id="1.14.99.60" evidence="1"/>
<dbReference type="EMBL" id="CP000546">
    <property type="protein sequence ID" value="ABN01800.1"/>
    <property type="status" value="ALT_INIT"/>
    <property type="molecule type" value="Genomic_DNA"/>
</dbReference>
<dbReference type="RefSeq" id="WP_004194286.1">
    <property type="nucleotide sequence ID" value="NC_008836.1"/>
</dbReference>
<dbReference type="SMR" id="A2S5V5"/>
<dbReference type="GeneID" id="92980253"/>
<dbReference type="KEGG" id="bml:BMA10229_A1341"/>
<dbReference type="HOGENOM" id="CLU_088601_0_0_4"/>
<dbReference type="UniPathway" id="UPA00232"/>
<dbReference type="Proteomes" id="UP000002283">
    <property type="component" value="Chromosome I"/>
</dbReference>
<dbReference type="GO" id="GO:0005886">
    <property type="term" value="C:plasma membrane"/>
    <property type="evidence" value="ECO:0007669"/>
    <property type="project" value="UniProtKB-SubCell"/>
</dbReference>
<dbReference type="GO" id="GO:0008682">
    <property type="term" value="F:3-demethoxyubiquinol 3-hydroxylase activity"/>
    <property type="evidence" value="ECO:0007669"/>
    <property type="project" value="UniProtKB-EC"/>
</dbReference>
<dbReference type="GO" id="GO:0046872">
    <property type="term" value="F:metal ion binding"/>
    <property type="evidence" value="ECO:0007669"/>
    <property type="project" value="UniProtKB-KW"/>
</dbReference>
<dbReference type="GO" id="GO:0006744">
    <property type="term" value="P:ubiquinone biosynthetic process"/>
    <property type="evidence" value="ECO:0007669"/>
    <property type="project" value="UniProtKB-UniRule"/>
</dbReference>
<dbReference type="CDD" id="cd01042">
    <property type="entry name" value="DMQH"/>
    <property type="match status" value="1"/>
</dbReference>
<dbReference type="Gene3D" id="1.20.1260.10">
    <property type="match status" value="1"/>
</dbReference>
<dbReference type="HAMAP" id="MF_01658">
    <property type="entry name" value="COQ7"/>
    <property type="match status" value="1"/>
</dbReference>
<dbReference type="InterPro" id="IPR047809">
    <property type="entry name" value="COQ7_proteobact"/>
</dbReference>
<dbReference type="InterPro" id="IPR012347">
    <property type="entry name" value="Ferritin-like"/>
</dbReference>
<dbReference type="InterPro" id="IPR009078">
    <property type="entry name" value="Ferritin-like_SF"/>
</dbReference>
<dbReference type="InterPro" id="IPR011566">
    <property type="entry name" value="Ubq_synth_Coq7"/>
</dbReference>
<dbReference type="NCBIfam" id="NF033656">
    <property type="entry name" value="DMQ_monoox_COQ7"/>
    <property type="match status" value="1"/>
</dbReference>
<dbReference type="PANTHER" id="PTHR11237:SF4">
    <property type="entry name" value="5-DEMETHOXYUBIQUINONE HYDROXYLASE, MITOCHONDRIAL"/>
    <property type="match status" value="1"/>
</dbReference>
<dbReference type="PANTHER" id="PTHR11237">
    <property type="entry name" value="COENZYME Q10 BIOSYNTHESIS PROTEIN 7"/>
    <property type="match status" value="1"/>
</dbReference>
<dbReference type="Pfam" id="PF03232">
    <property type="entry name" value="COQ7"/>
    <property type="match status" value="1"/>
</dbReference>
<dbReference type="SUPFAM" id="SSF47240">
    <property type="entry name" value="Ferritin-like"/>
    <property type="match status" value="1"/>
</dbReference>
<sequence length="208" mass="22533">MVFDELITEFDRGLRSIAGVSRMSRPVPKPAAAAPAELSAAERKHAAGLMRVNHVGEVCAQALYQAQKLTTSSAGLKEMFEHAAREEEDHLAWTAHRLKDLDSRPSLLNPLWYAGALAIGVVAGRLGDKVSLGFMAETERQVESHLDGHLSELPAADAESRAIVEQMRADEVKHGKSATDAGGIELPMPARMLMRAASKVMTSTAYYL</sequence>
<protein>
    <recommendedName>
        <fullName evidence="1">3-demethoxyubiquinol 3-hydroxylase</fullName>
        <shortName evidence="1">DMQ hydroxylase</shortName>
        <ecNumber evidence="1">1.14.99.60</ecNumber>
    </recommendedName>
    <alternativeName>
        <fullName evidence="1">2-nonaprenyl-3-methyl-6-methoxy-1,4-benzoquinol hydroxylase</fullName>
    </alternativeName>
</protein>
<accession>A2S5V5</accession>
<reference key="1">
    <citation type="journal article" date="2010" name="Genome Biol. Evol.">
        <title>Continuing evolution of Burkholderia mallei through genome reduction and large-scale rearrangements.</title>
        <authorList>
            <person name="Losada L."/>
            <person name="Ronning C.M."/>
            <person name="DeShazer D."/>
            <person name="Woods D."/>
            <person name="Fedorova N."/>
            <person name="Kim H.S."/>
            <person name="Shabalina S.A."/>
            <person name="Pearson T.R."/>
            <person name="Brinkac L."/>
            <person name="Tan P."/>
            <person name="Nandi T."/>
            <person name="Crabtree J."/>
            <person name="Badger J."/>
            <person name="Beckstrom-Sternberg S."/>
            <person name="Saqib M."/>
            <person name="Schutzer S.E."/>
            <person name="Keim P."/>
            <person name="Nierman W.C."/>
        </authorList>
    </citation>
    <scope>NUCLEOTIDE SEQUENCE [LARGE SCALE GENOMIC DNA]</scope>
    <source>
        <strain>NCTC 10229</strain>
    </source>
</reference>
<comment type="function">
    <text evidence="1">Catalyzes the hydroxylation of 2-nonaprenyl-3-methyl-6-methoxy-1,4-benzoquinol during ubiquinone biosynthesis.</text>
</comment>
<comment type="catalytic activity">
    <reaction evidence="1">
        <text>a 5-methoxy-2-methyl-3-(all-trans-polyprenyl)benzene-1,4-diol + AH2 + O2 = a 3-demethylubiquinol + A + H2O</text>
        <dbReference type="Rhea" id="RHEA:50908"/>
        <dbReference type="Rhea" id="RHEA-COMP:10859"/>
        <dbReference type="Rhea" id="RHEA-COMP:10914"/>
        <dbReference type="ChEBI" id="CHEBI:13193"/>
        <dbReference type="ChEBI" id="CHEBI:15377"/>
        <dbReference type="ChEBI" id="CHEBI:15379"/>
        <dbReference type="ChEBI" id="CHEBI:17499"/>
        <dbReference type="ChEBI" id="CHEBI:84167"/>
        <dbReference type="ChEBI" id="CHEBI:84422"/>
        <dbReference type="EC" id="1.14.99.60"/>
    </reaction>
</comment>
<comment type="cofactor">
    <cofactor evidence="1">
        <name>Fe cation</name>
        <dbReference type="ChEBI" id="CHEBI:24875"/>
    </cofactor>
    <text evidence="1">Binds 2 iron ions per subunit.</text>
</comment>
<comment type="pathway">
    <text evidence="1">Cofactor biosynthesis; ubiquinone biosynthesis.</text>
</comment>
<comment type="subcellular location">
    <subcellularLocation>
        <location evidence="1">Cell membrane</location>
        <topology evidence="1">Peripheral membrane protein</topology>
    </subcellularLocation>
</comment>
<comment type="similarity">
    <text evidence="1">Belongs to the COQ7 family.</text>
</comment>
<comment type="sequence caution" evidence="2">
    <conflict type="erroneous initiation">
        <sequence resource="EMBL-CDS" id="ABN01800"/>
    </conflict>
</comment>